<organism>
    <name type="scientific">Methanosarcina acetivorans (strain ATCC 35395 / DSM 2834 / JCM 12185 / C2A)</name>
    <dbReference type="NCBI Taxonomy" id="188937"/>
    <lineage>
        <taxon>Archaea</taxon>
        <taxon>Methanobacteriati</taxon>
        <taxon>Methanobacteriota</taxon>
        <taxon>Stenosarchaea group</taxon>
        <taxon>Methanomicrobia</taxon>
        <taxon>Methanosarcinales</taxon>
        <taxon>Methanosarcinaceae</taxon>
        <taxon>Methanosarcina</taxon>
    </lineage>
</organism>
<sequence>MVMEKLGDSLQGALKKLIGAGRIDERTVNEVVKDIQRALLQADVNVKLVMGMSQRIKERAMKEEPPAGMNPREHVIRIVYQELMEIIGKGAEIQLKPQTIMMVGLQGSGKTTSAAKLARYFQRKGLKAGVVAADTFRPGAYHQLKTLAEKLNVGFYGEEGNPDAVEITKNGLKALEKYDIRIVDTAGRHALEADLIEEMERIHAVAKPDHKFMVLDAGIGQQASQQAHAFNDSVGITGVIITKLDGTAKGGGALSAVSETKAPIAFIGVGETPEDFEKFEADRFISRLLGMGDLKSLMEKAEESLSEEDVNVEALMQGRFTLKDMYKQLEAMNKMGPLKQIMSMLPMGMGGMKFSDEMFQATSDKMKNYKVIMDSMTEEEMTDPRVIGGSRIKRISKGSGCSSEDVRELLKYHKTMQTALKGFRGGKFNIQKMMKKKMGM</sequence>
<dbReference type="EC" id="3.6.5.4" evidence="1"/>
<dbReference type="EMBL" id="AE010299">
    <property type="protein sequence ID" value="AAM07926.1"/>
    <property type="molecule type" value="Genomic_DNA"/>
</dbReference>
<dbReference type="RefSeq" id="WP_011024460.1">
    <property type="nucleotide sequence ID" value="NC_003552.1"/>
</dbReference>
<dbReference type="SMR" id="Q8THD0"/>
<dbReference type="FunCoup" id="Q8THD0">
    <property type="interactions" value="175"/>
</dbReference>
<dbReference type="STRING" id="188937.MA_4587"/>
<dbReference type="EnsemblBacteria" id="AAM07926">
    <property type="protein sequence ID" value="AAM07926"/>
    <property type="gene ID" value="MA_4587"/>
</dbReference>
<dbReference type="GeneID" id="1476481"/>
<dbReference type="KEGG" id="mac:MA_4587"/>
<dbReference type="HOGENOM" id="CLU_009301_6_0_2"/>
<dbReference type="InParanoid" id="Q8THD0"/>
<dbReference type="OrthoDB" id="52849at2157"/>
<dbReference type="PhylomeDB" id="Q8THD0"/>
<dbReference type="Proteomes" id="UP000002487">
    <property type="component" value="Chromosome"/>
</dbReference>
<dbReference type="GO" id="GO:0048500">
    <property type="term" value="C:signal recognition particle"/>
    <property type="evidence" value="ECO:0007669"/>
    <property type="project" value="UniProtKB-UniRule"/>
</dbReference>
<dbReference type="GO" id="GO:0008312">
    <property type="term" value="F:7S RNA binding"/>
    <property type="evidence" value="ECO:0007669"/>
    <property type="project" value="UniProtKB-UniRule"/>
</dbReference>
<dbReference type="GO" id="GO:0016887">
    <property type="term" value="F:ATP hydrolysis activity"/>
    <property type="evidence" value="ECO:0007669"/>
    <property type="project" value="InterPro"/>
</dbReference>
<dbReference type="GO" id="GO:0005525">
    <property type="term" value="F:GTP binding"/>
    <property type="evidence" value="ECO:0007669"/>
    <property type="project" value="UniProtKB-UniRule"/>
</dbReference>
<dbReference type="GO" id="GO:0003924">
    <property type="term" value="F:GTPase activity"/>
    <property type="evidence" value="ECO:0007669"/>
    <property type="project" value="UniProtKB-UniRule"/>
</dbReference>
<dbReference type="GO" id="GO:0006614">
    <property type="term" value="P:SRP-dependent cotranslational protein targeting to membrane"/>
    <property type="evidence" value="ECO:0007669"/>
    <property type="project" value="InterPro"/>
</dbReference>
<dbReference type="CDD" id="cd17875">
    <property type="entry name" value="SRP54_G"/>
    <property type="match status" value="1"/>
</dbReference>
<dbReference type="FunFam" id="3.40.50.300:FF:000022">
    <property type="entry name" value="Signal recognition particle 54 kDa subunit"/>
    <property type="match status" value="1"/>
</dbReference>
<dbReference type="Gene3D" id="3.40.50.300">
    <property type="entry name" value="P-loop containing nucleotide triphosphate hydrolases"/>
    <property type="match status" value="1"/>
</dbReference>
<dbReference type="Gene3D" id="1.20.120.140">
    <property type="entry name" value="Signal recognition particle SRP54, nucleotide-binding domain"/>
    <property type="match status" value="1"/>
</dbReference>
<dbReference type="Gene3D" id="1.10.260.30">
    <property type="entry name" value="Signal recognition particle, SRP54 subunit, M-domain"/>
    <property type="match status" value="1"/>
</dbReference>
<dbReference type="HAMAP" id="MF_00306">
    <property type="entry name" value="SRP54"/>
    <property type="match status" value="1"/>
</dbReference>
<dbReference type="InterPro" id="IPR003593">
    <property type="entry name" value="AAA+_ATPase"/>
</dbReference>
<dbReference type="InterPro" id="IPR027417">
    <property type="entry name" value="P-loop_NTPase"/>
</dbReference>
<dbReference type="InterPro" id="IPR036891">
    <property type="entry name" value="Signal_recog_part_SRP54_M_sf"/>
</dbReference>
<dbReference type="InterPro" id="IPR013822">
    <property type="entry name" value="Signal_recog_particl_SRP54_hlx"/>
</dbReference>
<dbReference type="InterPro" id="IPR004125">
    <property type="entry name" value="Signal_recog_particle_SRP54_M"/>
</dbReference>
<dbReference type="InterPro" id="IPR036225">
    <property type="entry name" value="SRP/SRP_N"/>
</dbReference>
<dbReference type="InterPro" id="IPR022941">
    <property type="entry name" value="SRP54"/>
</dbReference>
<dbReference type="InterPro" id="IPR000897">
    <property type="entry name" value="SRP54_GTPase_dom"/>
</dbReference>
<dbReference type="InterPro" id="IPR042101">
    <property type="entry name" value="SRP54_N_sf"/>
</dbReference>
<dbReference type="PANTHER" id="PTHR11564">
    <property type="entry name" value="SIGNAL RECOGNITION PARTICLE 54K PROTEIN SRP54"/>
    <property type="match status" value="1"/>
</dbReference>
<dbReference type="PANTHER" id="PTHR11564:SF5">
    <property type="entry name" value="SIGNAL RECOGNITION PARTICLE SUBUNIT SRP54"/>
    <property type="match status" value="1"/>
</dbReference>
<dbReference type="Pfam" id="PF00448">
    <property type="entry name" value="SRP54"/>
    <property type="match status" value="1"/>
</dbReference>
<dbReference type="Pfam" id="PF02881">
    <property type="entry name" value="SRP54_N"/>
    <property type="match status" value="1"/>
</dbReference>
<dbReference type="Pfam" id="PF02978">
    <property type="entry name" value="SRP_SPB"/>
    <property type="match status" value="1"/>
</dbReference>
<dbReference type="SMART" id="SM00382">
    <property type="entry name" value="AAA"/>
    <property type="match status" value="1"/>
</dbReference>
<dbReference type="SMART" id="SM00962">
    <property type="entry name" value="SRP54"/>
    <property type="match status" value="1"/>
</dbReference>
<dbReference type="SMART" id="SM00963">
    <property type="entry name" value="SRP54_N"/>
    <property type="match status" value="1"/>
</dbReference>
<dbReference type="SUPFAM" id="SSF47364">
    <property type="entry name" value="Domain of the SRP/SRP receptor G-proteins"/>
    <property type="match status" value="1"/>
</dbReference>
<dbReference type="SUPFAM" id="SSF52540">
    <property type="entry name" value="P-loop containing nucleoside triphosphate hydrolases"/>
    <property type="match status" value="1"/>
</dbReference>
<dbReference type="SUPFAM" id="SSF47446">
    <property type="entry name" value="Signal peptide-binding domain"/>
    <property type="match status" value="1"/>
</dbReference>
<dbReference type="PROSITE" id="PS00300">
    <property type="entry name" value="SRP54"/>
    <property type="match status" value="1"/>
</dbReference>
<protein>
    <recommendedName>
        <fullName evidence="1">Signal recognition particle 54 kDa protein</fullName>
        <shortName evidence="1">SRP54</shortName>
        <ecNumber evidence="1">3.6.5.4</ecNumber>
    </recommendedName>
</protein>
<reference key="1">
    <citation type="journal article" date="2002" name="Genome Res.">
        <title>The genome of Methanosarcina acetivorans reveals extensive metabolic and physiological diversity.</title>
        <authorList>
            <person name="Galagan J.E."/>
            <person name="Nusbaum C."/>
            <person name="Roy A."/>
            <person name="Endrizzi M.G."/>
            <person name="Macdonald P."/>
            <person name="FitzHugh W."/>
            <person name="Calvo S."/>
            <person name="Engels R."/>
            <person name="Smirnov S."/>
            <person name="Atnoor D."/>
            <person name="Brown A."/>
            <person name="Allen N."/>
            <person name="Naylor J."/>
            <person name="Stange-Thomann N."/>
            <person name="DeArellano K."/>
            <person name="Johnson R."/>
            <person name="Linton L."/>
            <person name="McEwan P."/>
            <person name="McKernan K."/>
            <person name="Talamas J."/>
            <person name="Tirrell A."/>
            <person name="Ye W."/>
            <person name="Zimmer A."/>
            <person name="Barber R.D."/>
            <person name="Cann I."/>
            <person name="Graham D.E."/>
            <person name="Grahame D.A."/>
            <person name="Guss A.M."/>
            <person name="Hedderich R."/>
            <person name="Ingram-Smith C."/>
            <person name="Kuettner H.C."/>
            <person name="Krzycki J.A."/>
            <person name="Leigh J.A."/>
            <person name="Li W."/>
            <person name="Liu J."/>
            <person name="Mukhopadhyay B."/>
            <person name="Reeve J.N."/>
            <person name="Smith K."/>
            <person name="Springer T.A."/>
            <person name="Umayam L.A."/>
            <person name="White O."/>
            <person name="White R.H."/>
            <person name="de Macario E.C."/>
            <person name="Ferry J.G."/>
            <person name="Jarrell K.F."/>
            <person name="Jing H."/>
            <person name="Macario A.J.L."/>
            <person name="Paulsen I.T."/>
            <person name="Pritchett M."/>
            <person name="Sowers K.R."/>
            <person name="Swanson R.V."/>
            <person name="Zinder S.H."/>
            <person name="Lander E."/>
            <person name="Metcalf W.W."/>
            <person name="Birren B."/>
        </authorList>
    </citation>
    <scope>NUCLEOTIDE SEQUENCE [LARGE SCALE GENOMIC DNA]</scope>
    <source>
        <strain>ATCC 35395 / DSM 2834 / JCM 12185 / C2A</strain>
    </source>
</reference>
<keyword id="KW-0963">Cytoplasm</keyword>
<keyword id="KW-0342">GTP-binding</keyword>
<keyword id="KW-0378">Hydrolase</keyword>
<keyword id="KW-0547">Nucleotide-binding</keyword>
<keyword id="KW-1185">Reference proteome</keyword>
<keyword id="KW-0687">Ribonucleoprotein</keyword>
<keyword id="KW-0694">RNA-binding</keyword>
<keyword id="KW-0733">Signal recognition particle</keyword>
<feature type="chain" id="PRO_0000101176" description="Signal recognition particle 54 kDa protein">
    <location>
        <begin position="1"/>
        <end position="440"/>
    </location>
</feature>
<feature type="binding site" evidence="1">
    <location>
        <begin position="104"/>
        <end position="111"/>
    </location>
    <ligand>
        <name>GTP</name>
        <dbReference type="ChEBI" id="CHEBI:37565"/>
    </ligand>
</feature>
<feature type="binding site" evidence="1">
    <location>
        <begin position="184"/>
        <end position="188"/>
    </location>
    <ligand>
        <name>GTP</name>
        <dbReference type="ChEBI" id="CHEBI:37565"/>
    </ligand>
</feature>
<feature type="binding site" evidence="1">
    <location>
        <begin position="242"/>
        <end position="245"/>
    </location>
    <ligand>
        <name>GTP</name>
        <dbReference type="ChEBI" id="CHEBI:37565"/>
    </ligand>
</feature>
<proteinExistence type="inferred from homology"/>
<comment type="function">
    <text evidence="1">Involved in targeting and insertion of nascent membrane proteins into the cytoplasmic membrane. Binds to the hydrophobic signal sequence of the ribosome-nascent chain (RNC) as it emerges from the ribosomes. The SRP-RNC complex is then targeted to the cytoplasmic membrane where it interacts with the SRP receptor FtsY.</text>
</comment>
<comment type="catalytic activity">
    <reaction evidence="1">
        <text>GTP + H2O = GDP + phosphate + H(+)</text>
        <dbReference type="Rhea" id="RHEA:19669"/>
        <dbReference type="ChEBI" id="CHEBI:15377"/>
        <dbReference type="ChEBI" id="CHEBI:15378"/>
        <dbReference type="ChEBI" id="CHEBI:37565"/>
        <dbReference type="ChEBI" id="CHEBI:43474"/>
        <dbReference type="ChEBI" id="CHEBI:58189"/>
        <dbReference type="EC" id="3.6.5.4"/>
    </reaction>
</comment>
<comment type="subunit">
    <text evidence="1">Part of the signal recognition particle protein translocation system, which is composed of SRP and FtsY. Archaeal SRP consists of a 7S RNA molecule of 300 nucleotides and two protein subunits: SRP54 and SRP19.</text>
</comment>
<comment type="subcellular location">
    <subcellularLocation>
        <location evidence="1">Cytoplasm</location>
    </subcellularLocation>
    <text evidence="1">The SRP-RNC complex is targeted to the cytoplasmic membrane.</text>
</comment>
<comment type="domain">
    <text evidence="1">Composed of three domains: the N-terminal N domain, which is responsible for interactions with the ribosome, the central G domain, which binds GTP, and the C-terminal M domain, which binds the RNA and the signal sequence of the RNC.</text>
</comment>
<comment type="similarity">
    <text evidence="1">Belongs to the GTP-binding SRP family. SRP54 subfamily.</text>
</comment>
<name>SRP54_METAC</name>
<evidence type="ECO:0000255" key="1">
    <source>
        <dbReference type="HAMAP-Rule" id="MF_00306"/>
    </source>
</evidence>
<accession>Q8THD0</accession>
<gene>
    <name evidence="1" type="primary">srp54</name>
    <name type="ordered locus">MA_4587</name>
</gene>